<proteinExistence type="inferred from homology"/>
<evidence type="ECO:0000255" key="1">
    <source>
        <dbReference type="HAMAP-Rule" id="MF_01220"/>
    </source>
</evidence>
<sequence>MRFIMPIKYKRMLLKLSGEALMGKDSYGINTGVLEFVAGEIKELVAMGVELGVVVGAGNIFRGMAGASKGMDRATADNMGMLATVMNSLAMQDALERSGVITRAMSAIPMQSICESYIRRRATRHLEKGRVVIFAAGTGNPYFTTDSAGVLRALEIDADIVVKATKVDGVYDKDPMIHDDAVKFEHLTYDDVLRKGLKVMDAAGIALAKDDDKPIMVLNMSVAGNMKKAALGERVGTLITA</sequence>
<gene>
    <name evidence="1" type="primary">pyrH</name>
    <name type="ordered locus">DP1156</name>
</gene>
<protein>
    <recommendedName>
        <fullName evidence="1">Uridylate kinase</fullName>
        <shortName evidence="1">UK</shortName>
        <ecNumber evidence="1">2.7.4.22</ecNumber>
    </recommendedName>
    <alternativeName>
        <fullName evidence="1">Uridine monophosphate kinase</fullName>
        <shortName evidence="1">UMP kinase</shortName>
        <shortName evidence="1">UMPK</shortName>
    </alternativeName>
</protein>
<keyword id="KW-0067">ATP-binding</keyword>
<keyword id="KW-0963">Cytoplasm</keyword>
<keyword id="KW-0418">Kinase</keyword>
<keyword id="KW-0547">Nucleotide-binding</keyword>
<keyword id="KW-0665">Pyrimidine biosynthesis</keyword>
<keyword id="KW-1185">Reference proteome</keyword>
<keyword id="KW-0808">Transferase</keyword>
<dbReference type="EC" id="2.7.4.22" evidence="1"/>
<dbReference type="EMBL" id="CR522870">
    <property type="protein sequence ID" value="CAG35885.1"/>
    <property type="molecule type" value="Genomic_DNA"/>
</dbReference>
<dbReference type="RefSeq" id="WP_011188397.1">
    <property type="nucleotide sequence ID" value="NC_006138.1"/>
</dbReference>
<dbReference type="SMR" id="Q6AP39"/>
<dbReference type="STRING" id="177439.DP1156"/>
<dbReference type="KEGG" id="dps:DP1156"/>
<dbReference type="eggNOG" id="COG0528">
    <property type="taxonomic scope" value="Bacteria"/>
</dbReference>
<dbReference type="HOGENOM" id="CLU_033861_0_0_7"/>
<dbReference type="OrthoDB" id="9807458at2"/>
<dbReference type="UniPathway" id="UPA00159">
    <property type="reaction ID" value="UER00275"/>
</dbReference>
<dbReference type="Proteomes" id="UP000000602">
    <property type="component" value="Chromosome"/>
</dbReference>
<dbReference type="GO" id="GO:0005829">
    <property type="term" value="C:cytosol"/>
    <property type="evidence" value="ECO:0007669"/>
    <property type="project" value="TreeGrafter"/>
</dbReference>
<dbReference type="GO" id="GO:0005524">
    <property type="term" value="F:ATP binding"/>
    <property type="evidence" value="ECO:0007669"/>
    <property type="project" value="UniProtKB-KW"/>
</dbReference>
<dbReference type="GO" id="GO:0033862">
    <property type="term" value="F:UMP kinase activity"/>
    <property type="evidence" value="ECO:0007669"/>
    <property type="project" value="UniProtKB-EC"/>
</dbReference>
<dbReference type="GO" id="GO:0044210">
    <property type="term" value="P:'de novo' CTP biosynthetic process"/>
    <property type="evidence" value="ECO:0007669"/>
    <property type="project" value="UniProtKB-UniRule"/>
</dbReference>
<dbReference type="GO" id="GO:0006225">
    <property type="term" value="P:UDP biosynthetic process"/>
    <property type="evidence" value="ECO:0007669"/>
    <property type="project" value="TreeGrafter"/>
</dbReference>
<dbReference type="CDD" id="cd04254">
    <property type="entry name" value="AAK_UMPK-PyrH-Ec"/>
    <property type="match status" value="1"/>
</dbReference>
<dbReference type="FunFam" id="3.40.1160.10:FF:000001">
    <property type="entry name" value="Uridylate kinase"/>
    <property type="match status" value="1"/>
</dbReference>
<dbReference type="Gene3D" id="3.40.1160.10">
    <property type="entry name" value="Acetylglutamate kinase-like"/>
    <property type="match status" value="1"/>
</dbReference>
<dbReference type="HAMAP" id="MF_01220_B">
    <property type="entry name" value="PyrH_B"/>
    <property type="match status" value="1"/>
</dbReference>
<dbReference type="InterPro" id="IPR036393">
    <property type="entry name" value="AceGlu_kinase-like_sf"/>
</dbReference>
<dbReference type="InterPro" id="IPR001048">
    <property type="entry name" value="Asp/Glu/Uridylate_kinase"/>
</dbReference>
<dbReference type="InterPro" id="IPR011817">
    <property type="entry name" value="Uridylate_kinase"/>
</dbReference>
<dbReference type="InterPro" id="IPR015963">
    <property type="entry name" value="Uridylate_kinase_bac"/>
</dbReference>
<dbReference type="NCBIfam" id="TIGR02075">
    <property type="entry name" value="pyrH_bact"/>
    <property type="match status" value="1"/>
</dbReference>
<dbReference type="PANTHER" id="PTHR42833">
    <property type="entry name" value="URIDYLATE KINASE"/>
    <property type="match status" value="1"/>
</dbReference>
<dbReference type="PANTHER" id="PTHR42833:SF4">
    <property type="entry name" value="URIDYLATE KINASE PUMPKIN, CHLOROPLASTIC"/>
    <property type="match status" value="1"/>
</dbReference>
<dbReference type="Pfam" id="PF00696">
    <property type="entry name" value="AA_kinase"/>
    <property type="match status" value="1"/>
</dbReference>
<dbReference type="PIRSF" id="PIRSF005650">
    <property type="entry name" value="Uridylate_kin"/>
    <property type="match status" value="1"/>
</dbReference>
<dbReference type="SUPFAM" id="SSF53633">
    <property type="entry name" value="Carbamate kinase-like"/>
    <property type="match status" value="1"/>
</dbReference>
<accession>Q6AP39</accession>
<reference key="1">
    <citation type="journal article" date="2004" name="Environ. Microbiol.">
        <title>The genome of Desulfotalea psychrophila, a sulfate-reducing bacterium from permanently cold Arctic sediments.</title>
        <authorList>
            <person name="Rabus R."/>
            <person name="Ruepp A."/>
            <person name="Frickey T."/>
            <person name="Rattei T."/>
            <person name="Fartmann B."/>
            <person name="Stark M."/>
            <person name="Bauer M."/>
            <person name="Zibat A."/>
            <person name="Lombardot T."/>
            <person name="Becker I."/>
            <person name="Amann J."/>
            <person name="Gellner K."/>
            <person name="Teeling H."/>
            <person name="Leuschner W.D."/>
            <person name="Gloeckner F.-O."/>
            <person name="Lupas A.N."/>
            <person name="Amann R."/>
            <person name="Klenk H.-P."/>
        </authorList>
    </citation>
    <scope>NUCLEOTIDE SEQUENCE [LARGE SCALE GENOMIC DNA]</scope>
    <source>
        <strain>DSM 12343 / LSv54</strain>
    </source>
</reference>
<comment type="function">
    <text evidence="1">Catalyzes the reversible phosphorylation of UMP to UDP.</text>
</comment>
<comment type="catalytic activity">
    <reaction evidence="1">
        <text>UMP + ATP = UDP + ADP</text>
        <dbReference type="Rhea" id="RHEA:24400"/>
        <dbReference type="ChEBI" id="CHEBI:30616"/>
        <dbReference type="ChEBI" id="CHEBI:57865"/>
        <dbReference type="ChEBI" id="CHEBI:58223"/>
        <dbReference type="ChEBI" id="CHEBI:456216"/>
        <dbReference type="EC" id="2.7.4.22"/>
    </reaction>
</comment>
<comment type="activity regulation">
    <text evidence="1">Inhibited by UTP.</text>
</comment>
<comment type="pathway">
    <text evidence="1">Pyrimidine metabolism; CTP biosynthesis via de novo pathway; UDP from UMP (UMPK route): step 1/1.</text>
</comment>
<comment type="subunit">
    <text evidence="1">Homohexamer.</text>
</comment>
<comment type="subcellular location">
    <subcellularLocation>
        <location evidence="1">Cytoplasm</location>
    </subcellularLocation>
</comment>
<comment type="similarity">
    <text evidence="1">Belongs to the UMP kinase family.</text>
</comment>
<organism>
    <name type="scientific">Desulfotalea psychrophila (strain LSv54 / DSM 12343)</name>
    <dbReference type="NCBI Taxonomy" id="177439"/>
    <lineage>
        <taxon>Bacteria</taxon>
        <taxon>Pseudomonadati</taxon>
        <taxon>Thermodesulfobacteriota</taxon>
        <taxon>Desulfobulbia</taxon>
        <taxon>Desulfobulbales</taxon>
        <taxon>Desulfocapsaceae</taxon>
        <taxon>Desulfotalea</taxon>
    </lineage>
</organism>
<feature type="chain" id="PRO_0000323836" description="Uridylate kinase">
    <location>
        <begin position="1"/>
        <end position="241"/>
    </location>
</feature>
<feature type="binding site" evidence="1">
    <location>
        <begin position="15"/>
        <end position="18"/>
    </location>
    <ligand>
        <name>ATP</name>
        <dbReference type="ChEBI" id="CHEBI:30616"/>
    </ligand>
</feature>
<feature type="binding site" evidence="1">
    <location>
        <position position="58"/>
    </location>
    <ligand>
        <name>ATP</name>
        <dbReference type="ChEBI" id="CHEBI:30616"/>
    </ligand>
</feature>
<feature type="binding site" evidence="1">
    <location>
        <position position="62"/>
    </location>
    <ligand>
        <name>ATP</name>
        <dbReference type="ChEBI" id="CHEBI:30616"/>
    </ligand>
</feature>
<feature type="binding site" evidence="1">
    <location>
        <position position="77"/>
    </location>
    <ligand>
        <name>UMP</name>
        <dbReference type="ChEBI" id="CHEBI:57865"/>
    </ligand>
</feature>
<feature type="binding site" evidence="1">
    <location>
        <begin position="138"/>
        <end position="145"/>
    </location>
    <ligand>
        <name>UMP</name>
        <dbReference type="ChEBI" id="CHEBI:57865"/>
    </ligand>
</feature>
<feature type="binding site" evidence="1">
    <location>
        <position position="165"/>
    </location>
    <ligand>
        <name>ATP</name>
        <dbReference type="ChEBI" id="CHEBI:30616"/>
    </ligand>
</feature>
<feature type="binding site" evidence="1">
    <location>
        <position position="171"/>
    </location>
    <ligand>
        <name>ATP</name>
        <dbReference type="ChEBI" id="CHEBI:30616"/>
    </ligand>
</feature>
<feature type="binding site" evidence="1">
    <location>
        <position position="174"/>
    </location>
    <ligand>
        <name>ATP</name>
        <dbReference type="ChEBI" id="CHEBI:30616"/>
    </ligand>
</feature>
<name>PYRH_DESPS</name>